<evidence type="ECO:0000255" key="1">
    <source>
        <dbReference type="HAMAP-Rule" id="MF_00465"/>
    </source>
</evidence>
<name>SPED_CLOP1</name>
<organism>
    <name type="scientific">Clostridium perfringens (strain ATCC 13124 / DSM 756 / JCM 1290 / NCIMB 6125 / NCTC 8237 / Type A)</name>
    <dbReference type="NCBI Taxonomy" id="195103"/>
    <lineage>
        <taxon>Bacteria</taxon>
        <taxon>Bacillati</taxon>
        <taxon>Bacillota</taxon>
        <taxon>Clostridia</taxon>
        <taxon>Eubacteriales</taxon>
        <taxon>Clostridiaceae</taxon>
        <taxon>Clostridium</taxon>
    </lineage>
</organism>
<accession>Q0TTQ9</accession>
<reference key="1">
    <citation type="journal article" date="2006" name="Genome Res.">
        <title>Skewed genomic variability in strains of the toxigenic bacterial pathogen, Clostridium perfringens.</title>
        <authorList>
            <person name="Myers G.S.A."/>
            <person name="Rasko D.A."/>
            <person name="Cheung J.K."/>
            <person name="Ravel J."/>
            <person name="Seshadri R."/>
            <person name="DeBoy R.T."/>
            <person name="Ren Q."/>
            <person name="Varga J."/>
            <person name="Awad M.M."/>
            <person name="Brinkac L.M."/>
            <person name="Daugherty S.C."/>
            <person name="Haft D.H."/>
            <person name="Dodson R.J."/>
            <person name="Madupu R."/>
            <person name="Nelson W.C."/>
            <person name="Rosovitz M.J."/>
            <person name="Sullivan S.A."/>
            <person name="Khouri H."/>
            <person name="Dimitrov G.I."/>
            <person name="Watkins K.L."/>
            <person name="Mulligan S."/>
            <person name="Benton J."/>
            <person name="Radune D."/>
            <person name="Fisher D.J."/>
            <person name="Atkins H.S."/>
            <person name="Hiscox T."/>
            <person name="Jost B.H."/>
            <person name="Billington S.J."/>
            <person name="Songer J.G."/>
            <person name="McClane B.A."/>
            <person name="Titball R.W."/>
            <person name="Rood J.I."/>
            <person name="Melville S.B."/>
            <person name="Paulsen I.T."/>
        </authorList>
    </citation>
    <scope>NUCLEOTIDE SEQUENCE [LARGE SCALE GENOMIC DNA]</scope>
    <source>
        <strain>ATCC 13124 / DSM 756 / JCM 1290 / NCIMB 6125 / NCTC 8237 / S 107 / Type A</strain>
    </source>
</reference>
<keyword id="KW-0068">Autocatalytic cleavage</keyword>
<keyword id="KW-0210">Decarboxylase</keyword>
<keyword id="KW-0456">Lyase</keyword>
<keyword id="KW-0620">Polyamine biosynthesis</keyword>
<keyword id="KW-0670">Pyruvate</keyword>
<keyword id="KW-0949">S-adenosyl-L-methionine</keyword>
<keyword id="KW-0704">Schiff base</keyword>
<keyword id="KW-0745">Spermidine biosynthesis</keyword>
<keyword id="KW-0865">Zymogen</keyword>
<protein>
    <recommendedName>
        <fullName evidence="1">S-adenosylmethionine decarboxylase proenzyme</fullName>
        <shortName evidence="1">AdoMetDC</shortName>
        <shortName evidence="1">SAMDC</shortName>
        <ecNumber evidence="1">4.1.1.50</ecNumber>
    </recommendedName>
    <component>
        <recommendedName>
            <fullName evidence="1">S-adenosylmethionine decarboxylase beta chain</fullName>
        </recommendedName>
    </component>
    <component>
        <recommendedName>
            <fullName evidence="1">S-adenosylmethionine decarboxylase alpha chain</fullName>
        </recommendedName>
    </component>
</protein>
<comment type="function">
    <text evidence="1">Catalyzes the decarboxylation of S-adenosylmethionine to S-adenosylmethioninamine (dcAdoMet), the propylamine donor required for the synthesis of the polyamines spermine and spermidine from the diamine putrescine.</text>
</comment>
<comment type="catalytic activity">
    <reaction evidence="1">
        <text>S-adenosyl-L-methionine + H(+) = S-adenosyl 3-(methylsulfanyl)propylamine + CO2</text>
        <dbReference type="Rhea" id="RHEA:15981"/>
        <dbReference type="ChEBI" id="CHEBI:15378"/>
        <dbReference type="ChEBI" id="CHEBI:16526"/>
        <dbReference type="ChEBI" id="CHEBI:57443"/>
        <dbReference type="ChEBI" id="CHEBI:59789"/>
        <dbReference type="EC" id="4.1.1.50"/>
    </reaction>
</comment>
<comment type="cofactor">
    <cofactor evidence="1">
        <name>pyruvate</name>
        <dbReference type="ChEBI" id="CHEBI:15361"/>
    </cofactor>
    <text evidence="1">Binds 1 pyruvoyl group covalently per subunit.</text>
</comment>
<comment type="pathway">
    <text evidence="1">Amine and polyamine biosynthesis; S-adenosylmethioninamine biosynthesis; S-adenosylmethioninamine from S-adenosyl-L-methionine: step 1/1.</text>
</comment>
<comment type="subunit">
    <text evidence="1">Heterooctamer of four alpha and four beta chains arranged as a tetramer of alpha/beta heterodimers.</text>
</comment>
<comment type="PTM">
    <text evidence="1">Is synthesized initially as an inactive proenzyme. Formation of the active enzyme involves a self-maturation process in which the active site pyruvoyl group is generated from an internal serine residue via an autocatalytic post-translational modification. Two non-identical subunits are generated from the proenzyme in this reaction, and the pyruvate is formed at the N-terminus of the alpha chain, which is derived from the carboxyl end of the proenzyme. The post-translation cleavage follows an unusual pathway, termed non-hydrolytic serinolysis, in which the side chain hydroxyl group of the serine supplies its oxygen atom to form the C-terminus of the beta chain, while the remainder of the serine residue undergoes an oxidative deamination to produce ammonia and the pyruvoyl group blocking the N-terminus of the alpha chain.</text>
</comment>
<comment type="similarity">
    <text evidence="1">Belongs to the prokaryotic AdoMetDC family. Type 2 subfamily.</text>
</comment>
<gene>
    <name evidence="1" type="primary">speD</name>
    <name type="ordered locus">CPF_0527</name>
</gene>
<dbReference type="EC" id="4.1.1.50" evidence="1"/>
<dbReference type="EMBL" id="CP000246">
    <property type="protein sequence ID" value="ABG84466.1"/>
    <property type="molecule type" value="Genomic_DNA"/>
</dbReference>
<dbReference type="RefSeq" id="WP_011009885.1">
    <property type="nucleotide sequence ID" value="NC_008261.1"/>
</dbReference>
<dbReference type="STRING" id="195103.CPF_0527"/>
<dbReference type="PaxDb" id="195103-CPF_0527"/>
<dbReference type="GeneID" id="93003129"/>
<dbReference type="KEGG" id="cpf:CPF_0527"/>
<dbReference type="eggNOG" id="COG1586">
    <property type="taxonomic scope" value="Bacteria"/>
</dbReference>
<dbReference type="HOGENOM" id="CLU_092007_0_0_9"/>
<dbReference type="UniPathway" id="UPA00331">
    <property type="reaction ID" value="UER00451"/>
</dbReference>
<dbReference type="Proteomes" id="UP000001823">
    <property type="component" value="Chromosome"/>
</dbReference>
<dbReference type="GO" id="GO:0005829">
    <property type="term" value="C:cytosol"/>
    <property type="evidence" value="ECO:0007669"/>
    <property type="project" value="TreeGrafter"/>
</dbReference>
<dbReference type="GO" id="GO:0004014">
    <property type="term" value="F:adenosylmethionine decarboxylase activity"/>
    <property type="evidence" value="ECO:0007669"/>
    <property type="project" value="UniProtKB-UniRule"/>
</dbReference>
<dbReference type="GO" id="GO:0008295">
    <property type="term" value="P:spermidine biosynthetic process"/>
    <property type="evidence" value="ECO:0007669"/>
    <property type="project" value="UniProtKB-UniRule"/>
</dbReference>
<dbReference type="Gene3D" id="3.60.90.10">
    <property type="entry name" value="S-adenosylmethionine decarboxylase"/>
    <property type="match status" value="1"/>
</dbReference>
<dbReference type="HAMAP" id="MF_00465">
    <property type="entry name" value="AdoMetDC_2"/>
    <property type="match status" value="1"/>
</dbReference>
<dbReference type="InterPro" id="IPR003826">
    <property type="entry name" value="AdoMetDC_fam_prok"/>
</dbReference>
<dbReference type="InterPro" id="IPR009165">
    <property type="entry name" value="S-AdoMet_deCO2ase_bac"/>
</dbReference>
<dbReference type="InterPro" id="IPR016067">
    <property type="entry name" value="S-AdoMet_deCO2ase_core"/>
</dbReference>
<dbReference type="NCBIfam" id="TIGR03331">
    <property type="entry name" value="SAM_DCase_Eco"/>
    <property type="match status" value="1"/>
</dbReference>
<dbReference type="PANTHER" id="PTHR33866">
    <property type="entry name" value="S-ADENOSYLMETHIONINE DECARBOXYLASE PROENZYME"/>
    <property type="match status" value="1"/>
</dbReference>
<dbReference type="PANTHER" id="PTHR33866:SF1">
    <property type="entry name" value="S-ADENOSYLMETHIONINE DECARBOXYLASE PROENZYME"/>
    <property type="match status" value="1"/>
</dbReference>
<dbReference type="Pfam" id="PF02675">
    <property type="entry name" value="AdoMet_dc"/>
    <property type="match status" value="1"/>
</dbReference>
<dbReference type="PIRSF" id="PIRSF001356">
    <property type="entry name" value="SAM_decarboxylas"/>
    <property type="match status" value="1"/>
</dbReference>
<dbReference type="SUPFAM" id="SSF56276">
    <property type="entry name" value="S-adenosylmethionine decarboxylase"/>
    <property type="match status" value="1"/>
</dbReference>
<feature type="chain" id="PRO_0000273591" description="S-adenosylmethionine decarboxylase beta chain" evidence="1">
    <location>
        <begin position="1"/>
        <end position="120"/>
    </location>
</feature>
<feature type="chain" id="PRO_0000273592" description="S-adenosylmethionine decarboxylase alpha chain" evidence="1">
    <location>
        <begin position="121"/>
        <end position="271"/>
    </location>
</feature>
<feature type="active site" description="Schiff-base intermediate with substrate; via pyruvic acid" evidence="1">
    <location>
        <position position="121"/>
    </location>
</feature>
<feature type="active site" description="Proton acceptor; for processing activity" evidence="1">
    <location>
        <position position="126"/>
    </location>
</feature>
<feature type="active site" description="Proton donor; for catalytic activity" evidence="1">
    <location>
        <position position="149"/>
    </location>
</feature>
<feature type="site" description="Cleavage (non-hydrolytic); by autolysis" evidence="1">
    <location>
        <begin position="120"/>
        <end position="121"/>
    </location>
</feature>
<feature type="modified residue" description="Pyruvic acid (Ser); by autocatalysis" evidence="1">
    <location>
        <position position="121"/>
    </location>
</feature>
<sequence>MLGLKEKICLYGFNNLTKTLSFNIYDICYAKTEREKEDYIKYIDEQYNSERLTKILCDVTEMIGAHVLNISKQDYEPQGASVNVLITEEALPVALIDPSCNKGELSYLELRDSVVGHLDKSHLTVHTYPEFHPNNDIISFRVDIDVSTCGKISPLNALDYLIGSFDSDVITIDYRVRGFTRDVDGRKCYIDHDIKSIQDYIDGETLKKYDAMDVNVYQSNIFHTKMMLKDIVLNNYLFNSDPYELSPNDRREIRDRISKEMIEIYGGVNIY</sequence>
<proteinExistence type="inferred from homology"/>